<gene>
    <name evidence="1" type="primary">nusB</name>
    <name type="ordered locus">Tola_2521</name>
</gene>
<sequence>MKPAERRKARHLALQAIYQWQLAKDNVADIVEQFKLEQPTKGVDLPYFELLLTGVVNNVTNLDATFSPFLSRKLDDLDQIDKGVLRLACYELTYCKDVPYKVVINEAIELAKAFATDDSHKFVNGVLDKVVKQMGLRQ</sequence>
<dbReference type="EMBL" id="CP001616">
    <property type="protein sequence ID" value="ACQ94115.1"/>
    <property type="molecule type" value="Genomic_DNA"/>
</dbReference>
<dbReference type="RefSeq" id="WP_015879564.1">
    <property type="nucleotide sequence ID" value="NC_012691.1"/>
</dbReference>
<dbReference type="SMR" id="C4LAE0"/>
<dbReference type="STRING" id="595494.Tola_2521"/>
<dbReference type="KEGG" id="tau:Tola_2521"/>
<dbReference type="eggNOG" id="COG0781">
    <property type="taxonomic scope" value="Bacteria"/>
</dbReference>
<dbReference type="HOGENOM" id="CLU_087843_4_1_6"/>
<dbReference type="OrthoDB" id="9789556at2"/>
<dbReference type="Proteomes" id="UP000009073">
    <property type="component" value="Chromosome"/>
</dbReference>
<dbReference type="GO" id="GO:0005829">
    <property type="term" value="C:cytosol"/>
    <property type="evidence" value="ECO:0007669"/>
    <property type="project" value="TreeGrafter"/>
</dbReference>
<dbReference type="GO" id="GO:0003723">
    <property type="term" value="F:RNA binding"/>
    <property type="evidence" value="ECO:0007669"/>
    <property type="project" value="UniProtKB-UniRule"/>
</dbReference>
<dbReference type="GO" id="GO:0006353">
    <property type="term" value="P:DNA-templated transcription termination"/>
    <property type="evidence" value="ECO:0007669"/>
    <property type="project" value="UniProtKB-UniRule"/>
</dbReference>
<dbReference type="GO" id="GO:0031564">
    <property type="term" value="P:transcription antitermination"/>
    <property type="evidence" value="ECO:0007669"/>
    <property type="project" value="UniProtKB-KW"/>
</dbReference>
<dbReference type="CDD" id="cd00619">
    <property type="entry name" value="Terminator_NusB"/>
    <property type="match status" value="1"/>
</dbReference>
<dbReference type="FunFam" id="1.10.940.10:FF:000001">
    <property type="entry name" value="Transcription antitermination factor NusB"/>
    <property type="match status" value="1"/>
</dbReference>
<dbReference type="Gene3D" id="1.10.940.10">
    <property type="entry name" value="NusB-like"/>
    <property type="match status" value="1"/>
</dbReference>
<dbReference type="HAMAP" id="MF_00073">
    <property type="entry name" value="NusB"/>
    <property type="match status" value="1"/>
</dbReference>
<dbReference type="InterPro" id="IPR035926">
    <property type="entry name" value="NusB-like_sf"/>
</dbReference>
<dbReference type="InterPro" id="IPR011605">
    <property type="entry name" value="NusB_fam"/>
</dbReference>
<dbReference type="InterPro" id="IPR006027">
    <property type="entry name" value="NusB_RsmB_TIM44"/>
</dbReference>
<dbReference type="NCBIfam" id="TIGR01951">
    <property type="entry name" value="nusB"/>
    <property type="match status" value="1"/>
</dbReference>
<dbReference type="PANTHER" id="PTHR11078:SF3">
    <property type="entry name" value="ANTITERMINATION NUSB DOMAIN-CONTAINING PROTEIN"/>
    <property type="match status" value="1"/>
</dbReference>
<dbReference type="PANTHER" id="PTHR11078">
    <property type="entry name" value="N UTILIZATION SUBSTANCE PROTEIN B-RELATED"/>
    <property type="match status" value="1"/>
</dbReference>
<dbReference type="Pfam" id="PF01029">
    <property type="entry name" value="NusB"/>
    <property type="match status" value="1"/>
</dbReference>
<dbReference type="SUPFAM" id="SSF48013">
    <property type="entry name" value="NusB-like"/>
    <property type="match status" value="1"/>
</dbReference>
<feature type="chain" id="PRO_1000202493" description="Transcription antitermination protein NusB">
    <location>
        <begin position="1"/>
        <end position="138"/>
    </location>
</feature>
<proteinExistence type="inferred from homology"/>
<organism>
    <name type="scientific">Tolumonas auensis (strain DSM 9187 / NBRC 110442 / TA 4)</name>
    <dbReference type="NCBI Taxonomy" id="595494"/>
    <lineage>
        <taxon>Bacteria</taxon>
        <taxon>Pseudomonadati</taxon>
        <taxon>Pseudomonadota</taxon>
        <taxon>Gammaproteobacteria</taxon>
        <taxon>Aeromonadales</taxon>
        <taxon>Aeromonadaceae</taxon>
        <taxon>Tolumonas</taxon>
    </lineage>
</organism>
<accession>C4LAE0</accession>
<comment type="function">
    <text evidence="1">Involved in transcription antitermination. Required for transcription of ribosomal RNA (rRNA) genes. Binds specifically to the boxA antiterminator sequence of the ribosomal RNA (rrn) operons.</text>
</comment>
<comment type="similarity">
    <text evidence="1">Belongs to the NusB family.</text>
</comment>
<evidence type="ECO:0000255" key="1">
    <source>
        <dbReference type="HAMAP-Rule" id="MF_00073"/>
    </source>
</evidence>
<name>NUSB_TOLAT</name>
<keyword id="KW-1185">Reference proteome</keyword>
<keyword id="KW-0694">RNA-binding</keyword>
<keyword id="KW-0804">Transcription</keyword>
<keyword id="KW-0889">Transcription antitermination</keyword>
<keyword id="KW-0805">Transcription regulation</keyword>
<reference key="1">
    <citation type="submission" date="2009-05" db="EMBL/GenBank/DDBJ databases">
        <title>Complete sequence of Tolumonas auensis DSM 9187.</title>
        <authorList>
            <consortium name="US DOE Joint Genome Institute"/>
            <person name="Lucas S."/>
            <person name="Copeland A."/>
            <person name="Lapidus A."/>
            <person name="Glavina del Rio T."/>
            <person name="Tice H."/>
            <person name="Bruce D."/>
            <person name="Goodwin L."/>
            <person name="Pitluck S."/>
            <person name="Chertkov O."/>
            <person name="Brettin T."/>
            <person name="Detter J.C."/>
            <person name="Han C."/>
            <person name="Larimer F."/>
            <person name="Land M."/>
            <person name="Hauser L."/>
            <person name="Kyrpides N."/>
            <person name="Mikhailova N."/>
            <person name="Spring S."/>
            <person name="Beller H."/>
        </authorList>
    </citation>
    <scope>NUCLEOTIDE SEQUENCE [LARGE SCALE GENOMIC DNA]</scope>
    <source>
        <strain>DSM 9187 / NBRC 110442 / TA 4</strain>
    </source>
</reference>
<protein>
    <recommendedName>
        <fullName evidence="1">Transcription antitermination protein NusB</fullName>
    </recommendedName>
    <alternativeName>
        <fullName evidence="1">Antitermination factor NusB</fullName>
    </alternativeName>
</protein>